<sequence>MKLWGGRFKKSESKLMEDFNSSLSFDRQLYKEDIEGSMVHVKMLAKCNILSSEESKAILSGLESILKDIEEGKLEVEGDYEDIHSFVEINLIERIGQVAKKLHTARSRNDQVALDFRLYAKRKALEVVENIEYLQDVIENLGDKNNVIMPGYTHLQRAQVVTFKHHIMAYYHMFKRDRERILNAICIMDESPLGCCALAGTTYNIDRNFTAQELGFKKPVDNFLDGVSDRDYVIELISDFSIIMMHLSRLSEELILWSSKEFDFIRIDDEFSTGSSIMPQKKNPDAAELIRGKTGRVYGSLVSLLTTMKGIPLAYNKDMQEDKEQLFNSLDTVLSCLKIMSGMLSTLKVNEKNTFNAVKKGFLNATEAADYLVNKGMAFRDAHKVIGEIVLYCEDKNRAIEDISLDELKKFSSLFEEDVYDFIDYENTINRGIKRNLK</sequence>
<protein>
    <recommendedName>
        <fullName evidence="1">Argininosuccinate lyase</fullName>
        <shortName evidence="1">ASAL</shortName>
        <ecNumber evidence="1">4.3.2.1</ecNumber>
    </recommendedName>
    <alternativeName>
        <fullName evidence="1">Arginosuccinase</fullName>
    </alternativeName>
</protein>
<proteinExistence type="inferred from homology"/>
<accession>B9E0B2</accession>
<comment type="catalytic activity">
    <reaction evidence="1">
        <text>2-(N(omega)-L-arginino)succinate = fumarate + L-arginine</text>
        <dbReference type="Rhea" id="RHEA:24020"/>
        <dbReference type="ChEBI" id="CHEBI:29806"/>
        <dbReference type="ChEBI" id="CHEBI:32682"/>
        <dbReference type="ChEBI" id="CHEBI:57472"/>
        <dbReference type="EC" id="4.3.2.1"/>
    </reaction>
</comment>
<comment type="pathway">
    <text evidence="1">Amino-acid biosynthesis; L-arginine biosynthesis; L-arginine from L-ornithine and carbamoyl phosphate: step 3/3.</text>
</comment>
<comment type="subcellular location">
    <subcellularLocation>
        <location evidence="1">Cytoplasm</location>
    </subcellularLocation>
</comment>
<comment type="similarity">
    <text evidence="1">Belongs to the lyase 1 family. Argininosuccinate lyase subfamily.</text>
</comment>
<gene>
    <name evidence="1" type="primary">argH</name>
    <name type="ordered locus">CKR_0886</name>
</gene>
<organism>
    <name type="scientific">Clostridium kluyveri (strain NBRC 12016)</name>
    <dbReference type="NCBI Taxonomy" id="583346"/>
    <lineage>
        <taxon>Bacteria</taxon>
        <taxon>Bacillati</taxon>
        <taxon>Bacillota</taxon>
        <taxon>Clostridia</taxon>
        <taxon>Eubacteriales</taxon>
        <taxon>Clostridiaceae</taxon>
        <taxon>Clostridium</taxon>
    </lineage>
</organism>
<reference key="1">
    <citation type="submission" date="2005-09" db="EMBL/GenBank/DDBJ databases">
        <title>Complete genome sequence of Clostridium kluyveri and comparative genomics of Clostridia species.</title>
        <authorList>
            <person name="Inui M."/>
            <person name="Nonaka H."/>
            <person name="Shinoda Y."/>
            <person name="Ikenaga Y."/>
            <person name="Abe M."/>
            <person name="Naito K."/>
            <person name="Vertes A.A."/>
            <person name="Yukawa H."/>
        </authorList>
    </citation>
    <scope>NUCLEOTIDE SEQUENCE [LARGE SCALE GENOMIC DNA]</scope>
    <source>
        <strain>NBRC 12016</strain>
    </source>
</reference>
<keyword id="KW-0028">Amino-acid biosynthesis</keyword>
<keyword id="KW-0055">Arginine biosynthesis</keyword>
<keyword id="KW-0963">Cytoplasm</keyword>
<keyword id="KW-0456">Lyase</keyword>
<feature type="chain" id="PRO_1000116317" description="Argininosuccinate lyase">
    <location>
        <begin position="1"/>
        <end position="438"/>
    </location>
</feature>
<name>ARLY_CLOK1</name>
<evidence type="ECO:0000255" key="1">
    <source>
        <dbReference type="HAMAP-Rule" id="MF_00006"/>
    </source>
</evidence>
<dbReference type="EC" id="4.3.2.1" evidence="1"/>
<dbReference type="EMBL" id="AP009049">
    <property type="protein sequence ID" value="BAH05937.1"/>
    <property type="molecule type" value="Genomic_DNA"/>
</dbReference>
<dbReference type="RefSeq" id="WP_012101354.1">
    <property type="nucleotide sequence ID" value="NC_011837.1"/>
</dbReference>
<dbReference type="SMR" id="B9E0B2"/>
<dbReference type="KEGG" id="ckr:CKR_0886"/>
<dbReference type="HOGENOM" id="CLU_027272_2_3_9"/>
<dbReference type="UniPathway" id="UPA00068">
    <property type="reaction ID" value="UER00114"/>
</dbReference>
<dbReference type="Proteomes" id="UP000007969">
    <property type="component" value="Chromosome"/>
</dbReference>
<dbReference type="GO" id="GO:0005829">
    <property type="term" value="C:cytosol"/>
    <property type="evidence" value="ECO:0007669"/>
    <property type="project" value="TreeGrafter"/>
</dbReference>
<dbReference type="GO" id="GO:0004056">
    <property type="term" value="F:argininosuccinate lyase activity"/>
    <property type="evidence" value="ECO:0007669"/>
    <property type="project" value="UniProtKB-UniRule"/>
</dbReference>
<dbReference type="GO" id="GO:0042450">
    <property type="term" value="P:arginine biosynthetic process via ornithine"/>
    <property type="evidence" value="ECO:0007669"/>
    <property type="project" value="InterPro"/>
</dbReference>
<dbReference type="GO" id="GO:0006526">
    <property type="term" value="P:L-arginine biosynthetic process"/>
    <property type="evidence" value="ECO:0007669"/>
    <property type="project" value="UniProtKB-UniRule"/>
</dbReference>
<dbReference type="CDD" id="cd01359">
    <property type="entry name" value="Argininosuccinate_lyase"/>
    <property type="match status" value="1"/>
</dbReference>
<dbReference type="FunFam" id="1.10.275.10:FF:000002">
    <property type="entry name" value="Argininosuccinate lyase"/>
    <property type="match status" value="1"/>
</dbReference>
<dbReference type="FunFam" id="1.10.40.30:FF:000001">
    <property type="entry name" value="Argininosuccinate lyase"/>
    <property type="match status" value="1"/>
</dbReference>
<dbReference type="FunFam" id="1.20.200.10:FF:000002">
    <property type="entry name" value="Argininosuccinate lyase"/>
    <property type="match status" value="1"/>
</dbReference>
<dbReference type="Gene3D" id="1.10.40.30">
    <property type="entry name" value="Fumarase/aspartase (C-terminal domain)"/>
    <property type="match status" value="1"/>
</dbReference>
<dbReference type="Gene3D" id="1.20.200.10">
    <property type="entry name" value="Fumarase/aspartase (Central domain)"/>
    <property type="match status" value="1"/>
</dbReference>
<dbReference type="Gene3D" id="1.10.275.10">
    <property type="entry name" value="Fumarase/aspartase (N-terminal domain)"/>
    <property type="match status" value="1"/>
</dbReference>
<dbReference type="HAMAP" id="MF_00006">
    <property type="entry name" value="Arg_succ_lyase"/>
    <property type="match status" value="1"/>
</dbReference>
<dbReference type="InterPro" id="IPR029419">
    <property type="entry name" value="Arg_succ_lyase_C"/>
</dbReference>
<dbReference type="InterPro" id="IPR009049">
    <property type="entry name" value="Argininosuccinate_lyase"/>
</dbReference>
<dbReference type="InterPro" id="IPR024083">
    <property type="entry name" value="Fumarase/histidase_N"/>
</dbReference>
<dbReference type="InterPro" id="IPR020557">
    <property type="entry name" value="Fumarate_lyase_CS"/>
</dbReference>
<dbReference type="InterPro" id="IPR000362">
    <property type="entry name" value="Fumarate_lyase_fam"/>
</dbReference>
<dbReference type="InterPro" id="IPR022761">
    <property type="entry name" value="Fumarate_lyase_N"/>
</dbReference>
<dbReference type="InterPro" id="IPR008948">
    <property type="entry name" value="L-Aspartase-like"/>
</dbReference>
<dbReference type="NCBIfam" id="TIGR00838">
    <property type="entry name" value="argH"/>
    <property type="match status" value="1"/>
</dbReference>
<dbReference type="PANTHER" id="PTHR43814">
    <property type="entry name" value="ARGININOSUCCINATE LYASE"/>
    <property type="match status" value="1"/>
</dbReference>
<dbReference type="PANTHER" id="PTHR43814:SF1">
    <property type="entry name" value="ARGININOSUCCINATE LYASE"/>
    <property type="match status" value="1"/>
</dbReference>
<dbReference type="Pfam" id="PF14698">
    <property type="entry name" value="ASL_C2"/>
    <property type="match status" value="1"/>
</dbReference>
<dbReference type="Pfam" id="PF00206">
    <property type="entry name" value="Lyase_1"/>
    <property type="match status" value="1"/>
</dbReference>
<dbReference type="PRINTS" id="PR00145">
    <property type="entry name" value="ARGSUCLYASE"/>
</dbReference>
<dbReference type="PRINTS" id="PR00149">
    <property type="entry name" value="FUMRATELYASE"/>
</dbReference>
<dbReference type="SUPFAM" id="SSF48557">
    <property type="entry name" value="L-aspartase-like"/>
    <property type="match status" value="1"/>
</dbReference>
<dbReference type="PROSITE" id="PS00163">
    <property type="entry name" value="FUMARATE_LYASES"/>
    <property type="match status" value="1"/>
</dbReference>